<name>ARP42_SCHPO</name>
<gene>
    <name type="primary">arp42</name>
    <name type="synonym">arp4</name>
    <name type="ORF">SPAC23D3.09</name>
</gene>
<sequence>MEEIPSLVIDPGSCWTRFGYAGEESPMTILPSYYGVRSDVTGRNKYVVDELQIHAPIPGMEVKNGKSNGIIQDWESTLYTWERGLKEKLQVNPTEYAMMITEPSWNPQSVRQQIMEAAFEQLHVPAFYLTKQAVCVAFANSKSTALIVDIGSDNASVTPVVDGLIIRKGIFKQSLAGDFLNANIEQLFNTMNIEFPPHYRIARKSVAIQQSGNMANGSADAVKPAVLYPPIQDLTSSYEIFQKRRVIEEWKESVLDVLDTPFDEAKASSRNPKPFEFPDGVTHKFGQERFRISEILFNPSFSASRSAETTPPQGSVGLHELVYQSILACDSELRSPLLNNIVVTGGTSLIPGLSERLQAEVQRLATGSRINVHTAETASATSNAVWFGGSILASLDNFQHLWVSKQEYDEVGVDRALFVEKRCK</sequence>
<dbReference type="EMBL" id="CU329670">
    <property type="protein sequence ID" value="CAA91244.2"/>
    <property type="molecule type" value="Genomic_DNA"/>
</dbReference>
<dbReference type="PIR" id="S62500">
    <property type="entry name" value="S62500"/>
</dbReference>
<dbReference type="RefSeq" id="NP_594546.2">
    <property type="nucleotide sequence ID" value="NM_001019975.2"/>
</dbReference>
<dbReference type="SMR" id="Q09849"/>
<dbReference type="BioGRID" id="277998">
    <property type="interactions" value="439"/>
</dbReference>
<dbReference type="ComplexPortal" id="CPX-6362">
    <property type="entry name" value="SWI/SNF chromatin remodelling complex"/>
</dbReference>
<dbReference type="ComplexPortal" id="CPX-6363">
    <property type="entry name" value="RSC chromatin remodelling complex"/>
</dbReference>
<dbReference type="DIP" id="DIP-48384N"/>
<dbReference type="FunCoup" id="Q09849">
    <property type="interactions" value="203"/>
</dbReference>
<dbReference type="IntAct" id="Q09849">
    <property type="interactions" value="18"/>
</dbReference>
<dbReference type="STRING" id="284812.Q09849"/>
<dbReference type="PaxDb" id="4896-SPAC23D3.09.1"/>
<dbReference type="EnsemblFungi" id="SPAC23D3.09.1">
    <property type="protein sequence ID" value="SPAC23D3.09.1:pep"/>
    <property type="gene ID" value="SPAC23D3.09"/>
</dbReference>
<dbReference type="GeneID" id="2541496"/>
<dbReference type="KEGG" id="spo:2541496"/>
<dbReference type="PomBase" id="SPAC23D3.09">
    <property type="gene designation" value="arp42"/>
</dbReference>
<dbReference type="VEuPathDB" id="FungiDB:SPAC23D3.09"/>
<dbReference type="eggNOG" id="KOG0679">
    <property type="taxonomic scope" value="Eukaryota"/>
</dbReference>
<dbReference type="HOGENOM" id="CLU_027965_6_2_1"/>
<dbReference type="InParanoid" id="Q09849"/>
<dbReference type="OMA" id="NMANGSA"/>
<dbReference type="Reactome" id="R-SPO-3214858">
    <property type="pathway name" value="RMTs methylate histone arginines"/>
</dbReference>
<dbReference type="PRO" id="PR:Q09849"/>
<dbReference type="Proteomes" id="UP000002485">
    <property type="component" value="Chromosome I"/>
</dbReference>
<dbReference type="GO" id="GO:0000785">
    <property type="term" value="C:chromatin"/>
    <property type="evidence" value="ECO:0000303"/>
    <property type="project" value="ComplexPortal"/>
</dbReference>
<dbReference type="GO" id="GO:0005829">
    <property type="term" value="C:cytosol"/>
    <property type="evidence" value="ECO:0007005"/>
    <property type="project" value="PomBase"/>
</dbReference>
<dbReference type="GO" id="GO:0031011">
    <property type="term" value="C:Ino80 complex"/>
    <property type="evidence" value="ECO:0000266"/>
    <property type="project" value="PomBase"/>
</dbReference>
<dbReference type="GO" id="GO:0005634">
    <property type="term" value="C:nucleus"/>
    <property type="evidence" value="ECO:0007005"/>
    <property type="project" value="PomBase"/>
</dbReference>
<dbReference type="GO" id="GO:0016586">
    <property type="term" value="C:RSC-type complex"/>
    <property type="evidence" value="ECO:0000314"/>
    <property type="project" value="PomBase"/>
</dbReference>
<dbReference type="GO" id="GO:0016514">
    <property type="term" value="C:SWI/SNF complex"/>
    <property type="evidence" value="ECO:0000314"/>
    <property type="project" value="PomBase"/>
</dbReference>
<dbReference type="GO" id="GO:0003682">
    <property type="term" value="F:chromatin binding"/>
    <property type="evidence" value="ECO:0000318"/>
    <property type="project" value="GO_Central"/>
</dbReference>
<dbReference type="GO" id="GO:0006338">
    <property type="term" value="P:chromatin remodeling"/>
    <property type="evidence" value="ECO:0000318"/>
    <property type="project" value="GO_Central"/>
</dbReference>
<dbReference type="GO" id="GO:0006357">
    <property type="term" value="P:regulation of transcription by RNA polymerase II"/>
    <property type="evidence" value="ECO:0000318"/>
    <property type="project" value="GO_Central"/>
</dbReference>
<dbReference type="GO" id="GO:0045815">
    <property type="term" value="P:transcription initiation-coupled chromatin remodeling"/>
    <property type="evidence" value="ECO:0000305"/>
    <property type="project" value="PomBase"/>
</dbReference>
<dbReference type="CDD" id="cd13395">
    <property type="entry name" value="ASKHA_NBD_Arp4_ACTL6-like"/>
    <property type="match status" value="1"/>
</dbReference>
<dbReference type="FunFam" id="3.30.420.40:FF:000058">
    <property type="entry name" value="Putative actin-related protein 5"/>
    <property type="match status" value="1"/>
</dbReference>
<dbReference type="FunFam" id="3.90.640.10:FF:000133">
    <property type="entry name" value="SWI/SNF and RSC complexes subunit arp42"/>
    <property type="match status" value="1"/>
</dbReference>
<dbReference type="Gene3D" id="3.30.420.40">
    <property type="match status" value="4"/>
</dbReference>
<dbReference type="Gene3D" id="3.90.640.10">
    <property type="entry name" value="Actin, Chain A, domain 4"/>
    <property type="match status" value="2"/>
</dbReference>
<dbReference type="InterPro" id="IPR004000">
    <property type="entry name" value="Actin"/>
</dbReference>
<dbReference type="InterPro" id="IPR004001">
    <property type="entry name" value="Actin_CS"/>
</dbReference>
<dbReference type="InterPro" id="IPR043129">
    <property type="entry name" value="ATPase_NBD"/>
</dbReference>
<dbReference type="PANTHER" id="PTHR11937">
    <property type="entry name" value="ACTIN"/>
    <property type="match status" value="1"/>
</dbReference>
<dbReference type="Pfam" id="PF00022">
    <property type="entry name" value="Actin"/>
    <property type="match status" value="1"/>
</dbReference>
<dbReference type="SMART" id="SM00268">
    <property type="entry name" value="ACTIN"/>
    <property type="match status" value="1"/>
</dbReference>
<dbReference type="SUPFAM" id="SSF53067">
    <property type="entry name" value="Actin-like ATPase domain"/>
    <property type="match status" value="2"/>
</dbReference>
<dbReference type="PROSITE" id="PS00432">
    <property type="entry name" value="ACTINS_2"/>
    <property type="match status" value="1"/>
</dbReference>
<reference key="1">
    <citation type="journal article" date="2002" name="Nature">
        <title>The genome sequence of Schizosaccharomyces pombe.</title>
        <authorList>
            <person name="Wood V."/>
            <person name="Gwilliam R."/>
            <person name="Rajandream M.A."/>
            <person name="Lyne M.H."/>
            <person name="Lyne R."/>
            <person name="Stewart A."/>
            <person name="Sgouros J.G."/>
            <person name="Peat N."/>
            <person name="Hayles J."/>
            <person name="Baker S.G."/>
            <person name="Basham D."/>
            <person name="Bowman S."/>
            <person name="Brooks K."/>
            <person name="Brown D."/>
            <person name="Brown S."/>
            <person name="Chillingworth T."/>
            <person name="Churcher C.M."/>
            <person name="Collins M."/>
            <person name="Connor R."/>
            <person name="Cronin A."/>
            <person name="Davis P."/>
            <person name="Feltwell T."/>
            <person name="Fraser A."/>
            <person name="Gentles S."/>
            <person name="Goble A."/>
            <person name="Hamlin N."/>
            <person name="Harris D.E."/>
            <person name="Hidalgo J."/>
            <person name="Hodgson G."/>
            <person name="Holroyd S."/>
            <person name="Hornsby T."/>
            <person name="Howarth S."/>
            <person name="Huckle E.J."/>
            <person name="Hunt S."/>
            <person name="Jagels K."/>
            <person name="James K.D."/>
            <person name="Jones L."/>
            <person name="Jones M."/>
            <person name="Leather S."/>
            <person name="McDonald S."/>
            <person name="McLean J."/>
            <person name="Mooney P."/>
            <person name="Moule S."/>
            <person name="Mungall K.L."/>
            <person name="Murphy L.D."/>
            <person name="Niblett D."/>
            <person name="Odell C."/>
            <person name="Oliver K."/>
            <person name="O'Neil S."/>
            <person name="Pearson D."/>
            <person name="Quail M.A."/>
            <person name="Rabbinowitsch E."/>
            <person name="Rutherford K.M."/>
            <person name="Rutter S."/>
            <person name="Saunders D."/>
            <person name="Seeger K."/>
            <person name="Sharp S."/>
            <person name="Skelton J."/>
            <person name="Simmonds M.N."/>
            <person name="Squares R."/>
            <person name="Squares S."/>
            <person name="Stevens K."/>
            <person name="Taylor K."/>
            <person name="Taylor R.G."/>
            <person name="Tivey A."/>
            <person name="Walsh S.V."/>
            <person name="Warren T."/>
            <person name="Whitehead S."/>
            <person name="Woodward J.R."/>
            <person name="Volckaert G."/>
            <person name="Aert R."/>
            <person name="Robben J."/>
            <person name="Grymonprez B."/>
            <person name="Weltjens I."/>
            <person name="Vanstreels E."/>
            <person name="Rieger M."/>
            <person name="Schaefer M."/>
            <person name="Mueller-Auer S."/>
            <person name="Gabel C."/>
            <person name="Fuchs M."/>
            <person name="Duesterhoeft A."/>
            <person name="Fritzc C."/>
            <person name="Holzer E."/>
            <person name="Moestl D."/>
            <person name="Hilbert H."/>
            <person name="Borzym K."/>
            <person name="Langer I."/>
            <person name="Beck A."/>
            <person name="Lehrach H."/>
            <person name="Reinhardt R."/>
            <person name="Pohl T.M."/>
            <person name="Eger P."/>
            <person name="Zimmermann W."/>
            <person name="Wedler H."/>
            <person name="Wambutt R."/>
            <person name="Purnelle B."/>
            <person name="Goffeau A."/>
            <person name="Cadieu E."/>
            <person name="Dreano S."/>
            <person name="Gloux S."/>
            <person name="Lelaure V."/>
            <person name="Mottier S."/>
            <person name="Galibert F."/>
            <person name="Aves S.J."/>
            <person name="Xiang Z."/>
            <person name="Hunt C."/>
            <person name="Moore K."/>
            <person name="Hurst S.M."/>
            <person name="Lucas M."/>
            <person name="Rochet M."/>
            <person name="Gaillardin C."/>
            <person name="Tallada V.A."/>
            <person name="Garzon A."/>
            <person name="Thode G."/>
            <person name="Daga R.R."/>
            <person name="Cruzado L."/>
            <person name="Jimenez J."/>
            <person name="Sanchez M."/>
            <person name="del Rey F."/>
            <person name="Benito J."/>
            <person name="Dominguez A."/>
            <person name="Revuelta J.L."/>
            <person name="Moreno S."/>
            <person name="Armstrong J."/>
            <person name="Forsburg S.L."/>
            <person name="Cerutti L."/>
            <person name="Lowe T."/>
            <person name="McCombie W.R."/>
            <person name="Paulsen I."/>
            <person name="Potashkin J."/>
            <person name="Shpakovski G.V."/>
            <person name="Ussery D."/>
            <person name="Barrell B.G."/>
            <person name="Nurse P."/>
        </authorList>
    </citation>
    <scope>NUCLEOTIDE SEQUENCE [LARGE SCALE GENOMIC DNA]</scope>
    <source>
        <strain>972 / ATCC 24843</strain>
    </source>
</reference>
<reference key="2">
    <citation type="journal article" date="2011" name="Science">
        <title>Comparative functional genomics of the fission yeasts.</title>
        <authorList>
            <person name="Rhind N."/>
            <person name="Chen Z."/>
            <person name="Yassour M."/>
            <person name="Thompson D.A."/>
            <person name="Haas B.J."/>
            <person name="Habib N."/>
            <person name="Wapinski I."/>
            <person name="Roy S."/>
            <person name="Lin M.F."/>
            <person name="Heiman D.I."/>
            <person name="Young S.K."/>
            <person name="Furuya K."/>
            <person name="Guo Y."/>
            <person name="Pidoux A."/>
            <person name="Chen H.M."/>
            <person name="Robbertse B."/>
            <person name="Goldberg J.M."/>
            <person name="Aoki K."/>
            <person name="Bayne E.H."/>
            <person name="Berlin A.M."/>
            <person name="Desjardins C.A."/>
            <person name="Dobbs E."/>
            <person name="Dukaj L."/>
            <person name="Fan L."/>
            <person name="FitzGerald M.G."/>
            <person name="French C."/>
            <person name="Gujja S."/>
            <person name="Hansen K."/>
            <person name="Keifenheim D."/>
            <person name="Levin J.Z."/>
            <person name="Mosher R.A."/>
            <person name="Mueller C.A."/>
            <person name="Pfiffner J."/>
            <person name="Priest M."/>
            <person name="Russ C."/>
            <person name="Smialowska A."/>
            <person name="Swoboda P."/>
            <person name="Sykes S.M."/>
            <person name="Vaughn M."/>
            <person name="Vengrova S."/>
            <person name="Yoder R."/>
            <person name="Zeng Q."/>
            <person name="Allshire R."/>
            <person name="Baulcombe D."/>
            <person name="Birren B.W."/>
            <person name="Brown W."/>
            <person name="Ekwall K."/>
            <person name="Kellis M."/>
            <person name="Leatherwood J."/>
            <person name="Levin H."/>
            <person name="Margalit H."/>
            <person name="Martienssen R."/>
            <person name="Nieduszynski C.A."/>
            <person name="Spatafora J.W."/>
            <person name="Friedman N."/>
            <person name="Dalgaard J.Z."/>
            <person name="Baumann P."/>
            <person name="Niki H."/>
            <person name="Regev A."/>
            <person name="Nusbaum C."/>
        </authorList>
    </citation>
    <scope>REVISION OF GENE MODEL</scope>
</reference>
<reference key="3">
    <citation type="journal article" date="2006" name="Nat. Biotechnol.">
        <title>ORFeome cloning and global analysis of protein localization in the fission yeast Schizosaccharomyces pombe.</title>
        <authorList>
            <person name="Matsuyama A."/>
            <person name="Arai R."/>
            <person name="Yashiroda Y."/>
            <person name="Shirai A."/>
            <person name="Kamata A."/>
            <person name="Sekido S."/>
            <person name="Kobayashi Y."/>
            <person name="Hashimoto A."/>
            <person name="Hamamoto M."/>
            <person name="Hiraoka Y."/>
            <person name="Horinouchi S."/>
            <person name="Yoshida M."/>
        </authorList>
    </citation>
    <scope>SUBCELLULAR LOCATION [LARGE SCALE ANALYSIS]</scope>
</reference>
<reference key="4">
    <citation type="journal article" date="2008" name="Nat. Struct. Mol. Biol.">
        <title>Fission yeast SWI/SNF and RSC complexes show compositional and functional differences from budding yeast.</title>
        <authorList>
            <person name="Monahan B.J."/>
            <person name="Villen J."/>
            <person name="Marguerat S."/>
            <person name="Baehler J."/>
            <person name="Gygi S.P."/>
            <person name="Winston F."/>
        </authorList>
    </citation>
    <scope>IDENTIFICATION IN THE SWI/SNF AND RSC COMPLEXES</scope>
    <scope>FUNCTION OF THE SWI/SNF AND RSC COMPLEXES</scope>
    <scope>IDENTIFICATION BY MASS SPECTROMETRY</scope>
</reference>
<keyword id="KW-0156">Chromatin regulator</keyword>
<keyword id="KW-0963">Cytoplasm</keyword>
<keyword id="KW-0539">Nucleus</keyword>
<keyword id="KW-1185">Reference proteome</keyword>
<keyword id="KW-0804">Transcription</keyword>
<keyword id="KW-0805">Transcription regulation</keyword>
<proteinExistence type="evidence at protein level"/>
<protein>
    <recommendedName>
        <fullName>SWI/SNF and RSC complexes subunit arp42</fullName>
    </recommendedName>
    <alternativeName>
        <fullName>Actin-related protein 42</fullName>
    </alternativeName>
    <alternativeName>
        <fullName>Chromatin structure-remodeling complex subunit arp42</fullName>
    </alternativeName>
</protein>
<accession>Q09849</accession>
<evidence type="ECO:0000250" key="1"/>
<evidence type="ECO:0000269" key="2">
    <source>
    </source>
</evidence>
<evidence type="ECO:0000269" key="3">
    <source>
    </source>
</evidence>
<evidence type="ECO:0000305" key="4"/>
<organism>
    <name type="scientific">Schizosaccharomyces pombe (strain 972 / ATCC 24843)</name>
    <name type="common">Fission yeast</name>
    <dbReference type="NCBI Taxonomy" id="284812"/>
    <lineage>
        <taxon>Eukaryota</taxon>
        <taxon>Fungi</taxon>
        <taxon>Dikarya</taxon>
        <taxon>Ascomycota</taxon>
        <taxon>Taphrinomycotina</taxon>
        <taxon>Schizosaccharomycetes</taxon>
        <taxon>Schizosaccharomycetales</taxon>
        <taxon>Schizosaccharomycetaceae</taxon>
        <taxon>Schizosaccharomyces</taxon>
    </lineage>
</organism>
<comment type="function">
    <text evidence="3">Component of the chromatin structure remodeling complex (RSC), which is involved in transcription regulation and nucleosome positioning. Controls particularly membrane and organelle development genes. Part of the SWI/SNF complex, an ATP-dependent chromatin remodeling complex, required for the positive and negative regulation of gene expression of a large number of genes. It changes chromatin structure by altering DNA-histone contacts within a nucleosome, leading eventually to a change in nucleosome position, thus facilitating or repressing binding of gene-specific transcription factors.</text>
</comment>
<comment type="subunit">
    <text evidence="1 3">Component of the RSC complex composed of at least arp9, arp42, rsc1, rsc4, rsc7, rsc9, rsc58, sfh1, snf21, ssr1, ssr2, ssr3 and ssr4. The complex interacts with histone and histone variant components of centromeric chromatin (By similarity). Component of the SWI/SNF global transcription activator complex composed of at least arp9, arp42, snf5, snf22, snf30, sbf59, sol1, ssr1, ssr2, ssr3, ssr4 and tfg3.</text>
</comment>
<comment type="subcellular location">
    <subcellularLocation>
        <location evidence="2">Cytoplasm</location>
    </subcellularLocation>
    <subcellularLocation>
        <location evidence="2">Nucleus</location>
    </subcellularLocation>
</comment>
<comment type="similarity">
    <text evidence="4">Belongs to the actin family.</text>
</comment>
<feature type="chain" id="PRO_0000089146" description="SWI/SNF and RSC complexes subunit arp42">
    <location>
        <begin position="1"/>
        <end position="424"/>
    </location>
</feature>